<keyword id="KW-0025">Alternative splicing</keyword>
<keyword id="KW-0225">Disease variant</keyword>
<keyword id="KW-1015">Disulfide bond</keyword>
<keyword id="KW-0325">Glycoprotein</keyword>
<keyword id="KW-0328">Glycosyltransferase</keyword>
<keyword id="KW-0333">Golgi apparatus</keyword>
<keyword id="KW-0890">Hereditary spastic paraplegia</keyword>
<keyword id="KW-0443">Lipid metabolism</keyword>
<keyword id="KW-0472">Membrane</keyword>
<keyword id="KW-0523">Neurodegeneration</keyword>
<keyword id="KW-1267">Proteomics identification</keyword>
<keyword id="KW-1185">Reference proteome</keyword>
<keyword id="KW-0735">Signal-anchor</keyword>
<keyword id="KW-0746">Sphingolipid metabolism</keyword>
<keyword id="KW-0808">Transferase</keyword>
<keyword id="KW-0812">Transmembrane</keyword>
<keyword id="KW-1133">Transmembrane helix</keyword>
<sequence length="533" mass="58882">MWLGRRALCALVLLLACASLGLLYASTRDAPGLRLPLAPWAPPQSPRRPELPDLAPEPRYAHIPVRIKEQVVGLLAWNNCSCESSGGGLPLPFQKQVRAIDLTKAFDPAELRAASATREQEFQAFLSRSQSPADQLLIAPANSPLQYPLQGVEVQPLRSILVPGLSLQAASGQEVYQVNLTASLGTWDVAGEVTGVTLTGEGQADLTLVSPGLDQLNRQLQLVTYSSRSYQTNTADTVRFSTEGHEAAFTIRIRHPPNPRLYPPGSLPQGAQYNISALVTIATKTFLRYDRLRALITSIRRFYPTVTVVIADDSDKPERVSGPYVEHYLMPFGKGWFAGRNLAVSQVTTKYVLWVDDDFVFTARTRLERLVDVLERTPLDLVGGAVREISGFATTYRQLLSVEPGAPGLGNCLRQRRGFHHELVGFPGCVVTDGVVNFFLARTDKVREVGFDPRLSRVAHLEFFLDGLGSLRVGSCSDVVVDHASKLKLPWTSRDAGAETYARYRYPGSLDESQMAKHRLLFFKHRLQCMTSQ</sequence>
<dbReference type="EC" id="2.4.1.92" evidence="4 6 7"/>
<dbReference type="EMBL" id="M83651">
    <property type="protein sequence ID" value="AAA35516.1"/>
    <property type="molecule type" value="mRNA"/>
</dbReference>
<dbReference type="EMBL" id="AK293432">
    <property type="protein sequence ID" value="BAG56937.1"/>
    <property type="molecule type" value="mRNA"/>
</dbReference>
<dbReference type="EMBL" id="AC025165">
    <property type="status" value="NOT_ANNOTATED_CDS"/>
    <property type="molecule type" value="Genomic_DNA"/>
</dbReference>
<dbReference type="EMBL" id="BC029828">
    <property type="protein sequence ID" value="AAH29828.1"/>
    <property type="molecule type" value="mRNA"/>
</dbReference>
<dbReference type="CCDS" id="CCDS61170.1">
    <molecule id="Q00973-2"/>
</dbReference>
<dbReference type="CCDS" id="CCDS61171.1">
    <molecule id="Q00973-3"/>
</dbReference>
<dbReference type="CCDS" id="CCDS8950.1">
    <molecule id="Q00973-1"/>
</dbReference>
<dbReference type="PIR" id="A44128">
    <property type="entry name" value="A44128"/>
</dbReference>
<dbReference type="PIR" id="A54379">
    <property type="entry name" value="A54379"/>
</dbReference>
<dbReference type="RefSeq" id="NP_001263397.1">
    <molecule id="Q00973-2"/>
    <property type="nucleotide sequence ID" value="NM_001276468.2"/>
</dbReference>
<dbReference type="RefSeq" id="NP_001263398.1">
    <molecule id="Q00973-3"/>
    <property type="nucleotide sequence ID" value="NM_001276469.2"/>
</dbReference>
<dbReference type="RefSeq" id="NP_001400902.1">
    <molecule id="Q00973-1"/>
    <property type="nucleotide sequence ID" value="NM_001413973.1"/>
</dbReference>
<dbReference type="RefSeq" id="NP_001400903.1">
    <molecule id="Q00973-1"/>
    <property type="nucleotide sequence ID" value="NM_001413974.1"/>
</dbReference>
<dbReference type="RefSeq" id="NP_001400907.1">
    <molecule id="Q00973-2"/>
    <property type="nucleotide sequence ID" value="NM_001413978.1"/>
</dbReference>
<dbReference type="RefSeq" id="NP_001469.1">
    <molecule id="Q00973-1"/>
    <property type="nucleotide sequence ID" value="NM_001478.5"/>
</dbReference>
<dbReference type="RefSeq" id="XP_016874631.1">
    <property type="nucleotide sequence ID" value="XM_017019142.1"/>
</dbReference>
<dbReference type="BioGRID" id="108856">
    <property type="interactions" value="31"/>
</dbReference>
<dbReference type="FunCoup" id="Q00973">
    <property type="interactions" value="678"/>
</dbReference>
<dbReference type="IntAct" id="Q00973">
    <property type="interactions" value="19"/>
</dbReference>
<dbReference type="STRING" id="9606.ENSP00000341562"/>
<dbReference type="SwissLipids" id="SLP:000000771"/>
<dbReference type="SwissLipids" id="SLP:000001406"/>
<dbReference type="CAZy" id="GT12">
    <property type="family name" value="Glycosyltransferase Family 12"/>
</dbReference>
<dbReference type="GlyCosmos" id="Q00973">
    <property type="glycosylation" value="3 sites, No reported glycans"/>
</dbReference>
<dbReference type="GlyGen" id="Q00973">
    <property type="glycosylation" value="4 sites"/>
</dbReference>
<dbReference type="iPTMnet" id="Q00973"/>
<dbReference type="PhosphoSitePlus" id="Q00973"/>
<dbReference type="SwissPalm" id="Q00973"/>
<dbReference type="BioMuta" id="B4GALNT1"/>
<dbReference type="DMDM" id="1168736"/>
<dbReference type="jPOST" id="Q00973"/>
<dbReference type="MassIVE" id="Q00973"/>
<dbReference type="PaxDb" id="9606-ENSP00000341562"/>
<dbReference type="PeptideAtlas" id="Q00973"/>
<dbReference type="ProteomicsDB" id="3917"/>
<dbReference type="ProteomicsDB" id="57885">
    <molecule id="Q00973-1"/>
</dbReference>
<dbReference type="ProteomicsDB" id="72129"/>
<dbReference type="Pumba" id="Q00973"/>
<dbReference type="Antibodypedia" id="2458">
    <property type="antibodies" value="252 antibodies from 30 providers"/>
</dbReference>
<dbReference type="DNASU" id="2583"/>
<dbReference type="Ensembl" id="ENST00000341156.9">
    <molecule id="Q00973-1"/>
    <property type="protein sequence ID" value="ENSP00000341562.4"/>
    <property type="gene ID" value="ENSG00000135454.14"/>
</dbReference>
<dbReference type="Ensembl" id="ENST00000418555.6">
    <molecule id="Q00973-2"/>
    <property type="protein sequence ID" value="ENSP00000401601.2"/>
    <property type="gene ID" value="ENSG00000135454.14"/>
</dbReference>
<dbReference type="Ensembl" id="ENST00000550764.5">
    <molecule id="Q00973-3"/>
    <property type="protein sequence ID" value="ENSP00000450303.1"/>
    <property type="gene ID" value="ENSG00000135454.14"/>
</dbReference>
<dbReference type="Ensembl" id="ENST00000552350.5">
    <molecule id="Q00973-3"/>
    <property type="protein sequence ID" value="ENSP00000448500.1"/>
    <property type="gene ID" value="ENSG00000135454.14"/>
</dbReference>
<dbReference type="GeneID" id="2583"/>
<dbReference type="KEGG" id="hsa:2583"/>
<dbReference type="MANE-Select" id="ENST00000341156.9">
    <property type="protein sequence ID" value="ENSP00000341562.4"/>
    <property type="RefSeq nucleotide sequence ID" value="NM_001478.5"/>
    <property type="RefSeq protein sequence ID" value="NP_001469.1"/>
</dbReference>
<dbReference type="UCSC" id="uc001spg.3">
    <molecule id="Q00973-1"/>
    <property type="organism name" value="human"/>
</dbReference>
<dbReference type="AGR" id="HGNC:4117"/>
<dbReference type="CTD" id="2583"/>
<dbReference type="DisGeNET" id="2583"/>
<dbReference type="GeneCards" id="B4GALNT1"/>
<dbReference type="HGNC" id="HGNC:4117">
    <property type="gene designation" value="B4GALNT1"/>
</dbReference>
<dbReference type="HPA" id="ENSG00000135454">
    <property type="expression patterns" value="Tissue enriched (brain)"/>
</dbReference>
<dbReference type="MalaCards" id="B4GALNT1"/>
<dbReference type="MIM" id="601873">
    <property type="type" value="gene"/>
</dbReference>
<dbReference type="MIM" id="609195">
    <property type="type" value="phenotype"/>
</dbReference>
<dbReference type="neXtProt" id="NX_Q00973"/>
<dbReference type="OpenTargets" id="ENSG00000135454"/>
<dbReference type="Orphanet" id="101006">
    <property type="disease" value="Autosomal recessive spastic paraplegia type 26"/>
</dbReference>
<dbReference type="PharmGKB" id="PA28532"/>
<dbReference type="VEuPathDB" id="HostDB:ENSG00000135454"/>
<dbReference type="eggNOG" id="ENOG502QTK7">
    <property type="taxonomic scope" value="Eukaryota"/>
</dbReference>
<dbReference type="GeneTree" id="ENSGT00390000006679"/>
<dbReference type="HOGENOM" id="CLU_036051_0_0_1"/>
<dbReference type="InParanoid" id="Q00973"/>
<dbReference type="OMA" id="REYQAFQ"/>
<dbReference type="OrthoDB" id="2139606at2759"/>
<dbReference type="PAN-GO" id="Q00973">
    <property type="GO annotations" value="2 GO annotations based on evolutionary models"/>
</dbReference>
<dbReference type="PhylomeDB" id="Q00973"/>
<dbReference type="TreeFam" id="TF332297"/>
<dbReference type="BioCyc" id="MetaCyc:HS06011-MONOMER"/>
<dbReference type="BRENDA" id="2.4.1.92">
    <property type="organism ID" value="2681"/>
</dbReference>
<dbReference type="PathwayCommons" id="Q00973"/>
<dbReference type="Reactome" id="R-HSA-9840309">
    <property type="pathway name" value="Glycosphingolipid biosynthesis"/>
</dbReference>
<dbReference type="SignaLink" id="Q00973"/>
<dbReference type="BioGRID-ORCS" id="2583">
    <property type="hits" value="30 hits in 1154 CRISPR screens"/>
</dbReference>
<dbReference type="GeneWiki" id="B4GALNT1"/>
<dbReference type="GenomeRNAi" id="2583"/>
<dbReference type="Pharos" id="Q00973">
    <property type="development level" value="Tbio"/>
</dbReference>
<dbReference type="PRO" id="PR:Q00973"/>
<dbReference type="Proteomes" id="UP000005640">
    <property type="component" value="Chromosome 12"/>
</dbReference>
<dbReference type="RNAct" id="Q00973">
    <property type="molecule type" value="protein"/>
</dbReference>
<dbReference type="Bgee" id="ENSG00000135454">
    <property type="expression patterns" value="Expressed in right hemisphere of cerebellum and 110 other cell types or tissues"/>
</dbReference>
<dbReference type="ExpressionAtlas" id="Q00973">
    <property type="expression patterns" value="baseline and differential"/>
</dbReference>
<dbReference type="GO" id="GO:0005794">
    <property type="term" value="C:Golgi apparatus"/>
    <property type="evidence" value="ECO:0000250"/>
    <property type="project" value="UniProtKB"/>
</dbReference>
<dbReference type="GO" id="GO:0000139">
    <property type="term" value="C:Golgi membrane"/>
    <property type="evidence" value="ECO:0000250"/>
    <property type="project" value="UniProtKB"/>
</dbReference>
<dbReference type="GO" id="GO:0016020">
    <property type="term" value="C:membrane"/>
    <property type="evidence" value="ECO:0000304"/>
    <property type="project" value="ProtInc"/>
</dbReference>
<dbReference type="GO" id="GO:0003947">
    <property type="term" value="F:(N-acetylneuraminyl)-galactosylglucosylceramide N-acetylgalactosaminyltransferase activity"/>
    <property type="evidence" value="ECO:0000314"/>
    <property type="project" value="UniProtKB"/>
</dbReference>
<dbReference type="GO" id="GO:0008376">
    <property type="term" value="F:acetylgalactosaminyltransferase activity"/>
    <property type="evidence" value="ECO:0000318"/>
    <property type="project" value="GO_Central"/>
</dbReference>
<dbReference type="GO" id="GO:0005975">
    <property type="term" value="P:carbohydrate metabolic process"/>
    <property type="evidence" value="ECO:0000304"/>
    <property type="project" value="ProtInc"/>
</dbReference>
<dbReference type="GO" id="GO:0008340">
    <property type="term" value="P:determination of adult lifespan"/>
    <property type="evidence" value="ECO:0007669"/>
    <property type="project" value="Ensembl"/>
</dbReference>
<dbReference type="GO" id="GO:0001574">
    <property type="term" value="P:ganglioside biosynthetic process"/>
    <property type="evidence" value="ECO:0000314"/>
    <property type="project" value="UniProtKB"/>
</dbReference>
<dbReference type="GO" id="GO:0006687">
    <property type="term" value="P:glycosphingolipid metabolic process"/>
    <property type="evidence" value="ECO:0000304"/>
    <property type="project" value="ProtInc"/>
</dbReference>
<dbReference type="GO" id="GO:0060173">
    <property type="term" value="P:limb development"/>
    <property type="evidence" value="ECO:0007669"/>
    <property type="project" value="Ensembl"/>
</dbReference>
<dbReference type="GO" id="GO:0030259">
    <property type="term" value="P:lipid glycosylation"/>
    <property type="evidence" value="ECO:0007669"/>
    <property type="project" value="InterPro"/>
</dbReference>
<dbReference type="GO" id="GO:0019915">
    <property type="term" value="P:lipid storage"/>
    <property type="evidence" value="ECO:0007669"/>
    <property type="project" value="Ensembl"/>
</dbReference>
<dbReference type="GO" id="GO:0061744">
    <property type="term" value="P:motor behavior"/>
    <property type="evidence" value="ECO:0007669"/>
    <property type="project" value="Ensembl"/>
</dbReference>
<dbReference type="GO" id="GO:0021675">
    <property type="term" value="P:nerve development"/>
    <property type="evidence" value="ECO:0007669"/>
    <property type="project" value="Ensembl"/>
</dbReference>
<dbReference type="GO" id="GO:0007283">
    <property type="term" value="P:spermatogenesis"/>
    <property type="evidence" value="ECO:0007669"/>
    <property type="project" value="Ensembl"/>
</dbReference>
<dbReference type="GO" id="GO:0007033">
    <property type="term" value="P:vacuole organization"/>
    <property type="evidence" value="ECO:0007669"/>
    <property type="project" value="Ensembl"/>
</dbReference>
<dbReference type="CDD" id="cd00761">
    <property type="entry name" value="Glyco_tranf_GTA_type"/>
    <property type="match status" value="1"/>
</dbReference>
<dbReference type="FunFam" id="3.90.550.10:FF:000076">
    <property type="entry name" value="Beta-1,4 N-acetylgalactosaminyltransferase"/>
    <property type="match status" value="1"/>
</dbReference>
<dbReference type="Gene3D" id="3.90.550.10">
    <property type="entry name" value="Spore Coat Polysaccharide Biosynthesis Protein SpsA, Chain A"/>
    <property type="match status" value="1"/>
</dbReference>
<dbReference type="InterPro" id="IPR001173">
    <property type="entry name" value="Glyco_trans_2-like"/>
</dbReference>
<dbReference type="InterPro" id="IPR011143">
    <property type="entry name" value="GM2_synthase"/>
</dbReference>
<dbReference type="InterPro" id="IPR029044">
    <property type="entry name" value="Nucleotide-diphossugar_trans"/>
</dbReference>
<dbReference type="PANTHER" id="PTHR15046:SF1">
    <property type="entry name" value="BETA-1,4 N-ACETYLGALACTOSAMINYLTRANSFERASE 1"/>
    <property type="match status" value="1"/>
</dbReference>
<dbReference type="PANTHER" id="PTHR15046">
    <property type="entry name" value="GLYCO_TRANS_2-LIKE DOMAIN-CONTAINING PROTEIN"/>
    <property type="match status" value="1"/>
</dbReference>
<dbReference type="Pfam" id="PF00535">
    <property type="entry name" value="Glycos_transf_2"/>
    <property type="match status" value="1"/>
</dbReference>
<dbReference type="PIRSF" id="PIRSF000474">
    <property type="entry name" value="GM2_GD2_synthase"/>
    <property type="match status" value="1"/>
</dbReference>
<dbReference type="SUPFAM" id="SSF53448">
    <property type="entry name" value="Nucleotide-diphospho-sugar transferases"/>
    <property type="match status" value="1"/>
</dbReference>
<accession>Q00973</accession>
<accession>B4DE26</accession>
<accession>Q8N636</accession>
<gene>
    <name evidence="12" type="primary">B4GALNT1</name>
    <name type="synonym">GALGT</name>
    <name type="synonym">SIAT2</name>
</gene>
<protein>
    <recommendedName>
        <fullName evidence="10">Beta-1,4 N-acetylgalactosaminyltransferase 1</fullName>
        <ecNumber evidence="4 6 7">2.4.1.92</ecNumber>
    </recommendedName>
    <alternativeName>
        <fullName>(N-acetylneuraminyl)-galactosylglucosylceramide</fullName>
    </alternativeName>
    <alternativeName>
        <fullName>GM2/GD2 synthase</fullName>
    </alternativeName>
    <alternativeName>
        <fullName>GalNAc-T</fullName>
    </alternativeName>
</protein>
<reference key="1">
    <citation type="journal article" date="1992" name="J. Biol. Chem.">
        <title>Expression cloning of beta 1,4 N-acetylgalactosaminyltransferase cDNAs that determine the expression of GM2 and GD2 gangliosides.</title>
        <authorList>
            <person name="Nagata Y."/>
            <person name="Yamashiro S."/>
            <person name="Yodoi J."/>
            <person name="Lloyd K.O."/>
            <person name="Shiku H."/>
            <person name="Furukawa K."/>
        </authorList>
    </citation>
    <scope>NUCLEOTIDE SEQUENCE [MRNA] (ISOFORM 1)</scope>
    <scope>FUNCTION</scope>
    <scope>CATALYTIC ACTIVITY</scope>
    <scope>PATHWAY</scope>
</reference>
<reference key="2">
    <citation type="journal article" date="1994" name="J. Biol. Chem.">
        <title>Expression cloning of beta 1,4 N-acetylgalactosaminyltransferase cDNAs that determine the expression of GM2 and GD2 gangliosides.</title>
        <authorList>
            <person name="Nagata Y."/>
            <person name="Yamashiro S."/>
            <person name="Yodoi J."/>
            <person name="Lloyd K.O."/>
            <person name="Shiku H."/>
            <person name="Furukawa K."/>
        </authorList>
    </citation>
    <scope>SEQUENCE REVISION TO 412-533</scope>
</reference>
<reference key="3">
    <citation type="journal article" date="2004" name="Nat. Genet.">
        <title>Complete sequencing and characterization of 21,243 full-length human cDNAs.</title>
        <authorList>
            <person name="Ota T."/>
            <person name="Suzuki Y."/>
            <person name="Nishikawa T."/>
            <person name="Otsuki T."/>
            <person name="Sugiyama T."/>
            <person name="Irie R."/>
            <person name="Wakamatsu A."/>
            <person name="Hayashi K."/>
            <person name="Sato H."/>
            <person name="Nagai K."/>
            <person name="Kimura K."/>
            <person name="Makita H."/>
            <person name="Sekine M."/>
            <person name="Obayashi M."/>
            <person name="Nishi T."/>
            <person name="Shibahara T."/>
            <person name="Tanaka T."/>
            <person name="Ishii S."/>
            <person name="Yamamoto J."/>
            <person name="Saito K."/>
            <person name="Kawai Y."/>
            <person name="Isono Y."/>
            <person name="Nakamura Y."/>
            <person name="Nagahari K."/>
            <person name="Murakami K."/>
            <person name="Yasuda T."/>
            <person name="Iwayanagi T."/>
            <person name="Wagatsuma M."/>
            <person name="Shiratori A."/>
            <person name="Sudo H."/>
            <person name="Hosoiri T."/>
            <person name="Kaku Y."/>
            <person name="Kodaira H."/>
            <person name="Kondo H."/>
            <person name="Sugawara M."/>
            <person name="Takahashi M."/>
            <person name="Kanda K."/>
            <person name="Yokoi T."/>
            <person name="Furuya T."/>
            <person name="Kikkawa E."/>
            <person name="Omura Y."/>
            <person name="Abe K."/>
            <person name="Kamihara K."/>
            <person name="Katsuta N."/>
            <person name="Sato K."/>
            <person name="Tanikawa M."/>
            <person name="Yamazaki M."/>
            <person name="Ninomiya K."/>
            <person name="Ishibashi T."/>
            <person name="Yamashita H."/>
            <person name="Murakawa K."/>
            <person name="Fujimori K."/>
            <person name="Tanai H."/>
            <person name="Kimata M."/>
            <person name="Watanabe M."/>
            <person name="Hiraoka S."/>
            <person name="Chiba Y."/>
            <person name="Ishida S."/>
            <person name="Ono Y."/>
            <person name="Takiguchi S."/>
            <person name="Watanabe S."/>
            <person name="Yosida M."/>
            <person name="Hotuta T."/>
            <person name="Kusano J."/>
            <person name="Kanehori K."/>
            <person name="Takahashi-Fujii A."/>
            <person name="Hara H."/>
            <person name="Tanase T.-O."/>
            <person name="Nomura Y."/>
            <person name="Togiya S."/>
            <person name="Komai F."/>
            <person name="Hara R."/>
            <person name="Takeuchi K."/>
            <person name="Arita M."/>
            <person name="Imose N."/>
            <person name="Musashino K."/>
            <person name="Yuuki H."/>
            <person name="Oshima A."/>
            <person name="Sasaki N."/>
            <person name="Aotsuka S."/>
            <person name="Yoshikawa Y."/>
            <person name="Matsunawa H."/>
            <person name="Ichihara T."/>
            <person name="Shiohata N."/>
            <person name="Sano S."/>
            <person name="Moriya S."/>
            <person name="Momiyama H."/>
            <person name="Satoh N."/>
            <person name="Takami S."/>
            <person name="Terashima Y."/>
            <person name="Suzuki O."/>
            <person name="Nakagawa S."/>
            <person name="Senoh A."/>
            <person name="Mizoguchi H."/>
            <person name="Goto Y."/>
            <person name="Shimizu F."/>
            <person name="Wakebe H."/>
            <person name="Hishigaki H."/>
            <person name="Watanabe T."/>
            <person name="Sugiyama A."/>
            <person name="Takemoto M."/>
            <person name="Kawakami B."/>
            <person name="Yamazaki M."/>
            <person name="Watanabe K."/>
            <person name="Kumagai A."/>
            <person name="Itakura S."/>
            <person name="Fukuzumi Y."/>
            <person name="Fujimori Y."/>
            <person name="Komiyama M."/>
            <person name="Tashiro H."/>
            <person name="Tanigami A."/>
            <person name="Fujiwara T."/>
            <person name="Ono T."/>
            <person name="Yamada K."/>
            <person name="Fujii Y."/>
            <person name="Ozaki K."/>
            <person name="Hirao M."/>
            <person name="Ohmori Y."/>
            <person name="Kawabata A."/>
            <person name="Hikiji T."/>
            <person name="Kobatake N."/>
            <person name="Inagaki H."/>
            <person name="Ikema Y."/>
            <person name="Okamoto S."/>
            <person name="Okitani R."/>
            <person name="Kawakami T."/>
            <person name="Noguchi S."/>
            <person name="Itoh T."/>
            <person name="Shigeta K."/>
            <person name="Senba T."/>
            <person name="Matsumura K."/>
            <person name="Nakajima Y."/>
            <person name="Mizuno T."/>
            <person name="Morinaga M."/>
            <person name="Sasaki M."/>
            <person name="Togashi T."/>
            <person name="Oyama M."/>
            <person name="Hata H."/>
            <person name="Watanabe M."/>
            <person name="Komatsu T."/>
            <person name="Mizushima-Sugano J."/>
            <person name="Satoh T."/>
            <person name="Shirai Y."/>
            <person name="Takahashi Y."/>
            <person name="Nakagawa K."/>
            <person name="Okumura K."/>
            <person name="Nagase T."/>
            <person name="Nomura N."/>
            <person name="Kikuchi H."/>
            <person name="Masuho Y."/>
            <person name="Yamashita R."/>
            <person name="Nakai K."/>
            <person name="Yada T."/>
            <person name="Nakamura Y."/>
            <person name="Ohara O."/>
            <person name="Isogai T."/>
            <person name="Sugano S."/>
        </authorList>
    </citation>
    <scope>NUCLEOTIDE SEQUENCE [LARGE SCALE MRNA] (ISOFORM 2)</scope>
</reference>
<reference key="4">
    <citation type="journal article" date="2006" name="Nature">
        <title>The finished DNA sequence of human chromosome 12.</title>
        <authorList>
            <person name="Scherer S.E."/>
            <person name="Muzny D.M."/>
            <person name="Buhay C.J."/>
            <person name="Chen R."/>
            <person name="Cree A."/>
            <person name="Ding Y."/>
            <person name="Dugan-Rocha S."/>
            <person name="Gill R."/>
            <person name="Gunaratne P."/>
            <person name="Harris R.A."/>
            <person name="Hawes A.C."/>
            <person name="Hernandez J."/>
            <person name="Hodgson A.V."/>
            <person name="Hume J."/>
            <person name="Jackson A."/>
            <person name="Khan Z.M."/>
            <person name="Kovar-Smith C."/>
            <person name="Lewis L.R."/>
            <person name="Lozado R.J."/>
            <person name="Metzker M.L."/>
            <person name="Milosavljevic A."/>
            <person name="Miner G.R."/>
            <person name="Montgomery K.T."/>
            <person name="Morgan M.B."/>
            <person name="Nazareth L.V."/>
            <person name="Scott G."/>
            <person name="Sodergren E."/>
            <person name="Song X.-Z."/>
            <person name="Steffen D."/>
            <person name="Lovering R.C."/>
            <person name="Wheeler D.A."/>
            <person name="Worley K.C."/>
            <person name="Yuan Y."/>
            <person name="Zhang Z."/>
            <person name="Adams C.Q."/>
            <person name="Ansari-Lari M.A."/>
            <person name="Ayele M."/>
            <person name="Brown M.J."/>
            <person name="Chen G."/>
            <person name="Chen Z."/>
            <person name="Clerc-Blankenburg K.P."/>
            <person name="Davis C."/>
            <person name="Delgado O."/>
            <person name="Dinh H.H."/>
            <person name="Draper H."/>
            <person name="Gonzalez-Garay M.L."/>
            <person name="Havlak P."/>
            <person name="Jackson L.R."/>
            <person name="Jacob L.S."/>
            <person name="Kelly S.H."/>
            <person name="Li L."/>
            <person name="Li Z."/>
            <person name="Liu J."/>
            <person name="Liu W."/>
            <person name="Lu J."/>
            <person name="Maheshwari M."/>
            <person name="Nguyen B.-V."/>
            <person name="Okwuonu G.O."/>
            <person name="Pasternak S."/>
            <person name="Perez L.M."/>
            <person name="Plopper F.J.H."/>
            <person name="Santibanez J."/>
            <person name="Shen H."/>
            <person name="Tabor P.E."/>
            <person name="Verduzco D."/>
            <person name="Waldron L."/>
            <person name="Wang Q."/>
            <person name="Williams G.A."/>
            <person name="Zhang J."/>
            <person name="Zhou J."/>
            <person name="Allen C.C."/>
            <person name="Amin A.G."/>
            <person name="Anyalebechi V."/>
            <person name="Bailey M."/>
            <person name="Barbaria J.A."/>
            <person name="Bimage K.E."/>
            <person name="Bryant N.P."/>
            <person name="Burch P.E."/>
            <person name="Burkett C.E."/>
            <person name="Burrell K.L."/>
            <person name="Calderon E."/>
            <person name="Cardenas V."/>
            <person name="Carter K."/>
            <person name="Casias K."/>
            <person name="Cavazos I."/>
            <person name="Cavazos S.R."/>
            <person name="Ceasar H."/>
            <person name="Chacko J."/>
            <person name="Chan S.N."/>
            <person name="Chavez D."/>
            <person name="Christopoulos C."/>
            <person name="Chu J."/>
            <person name="Cockrell R."/>
            <person name="Cox C.D."/>
            <person name="Dang M."/>
            <person name="Dathorne S.R."/>
            <person name="David R."/>
            <person name="Davis C.M."/>
            <person name="Davy-Carroll L."/>
            <person name="Deshazo D.R."/>
            <person name="Donlin J.E."/>
            <person name="D'Souza L."/>
            <person name="Eaves K.A."/>
            <person name="Egan A."/>
            <person name="Emery-Cohen A.J."/>
            <person name="Escotto M."/>
            <person name="Flagg N."/>
            <person name="Forbes L.D."/>
            <person name="Gabisi A.M."/>
            <person name="Garza M."/>
            <person name="Hamilton C."/>
            <person name="Henderson N."/>
            <person name="Hernandez O."/>
            <person name="Hines S."/>
            <person name="Hogues M.E."/>
            <person name="Huang M."/>
            <person name="Idlebird D.G."/>
            <person name="Johnson R."/>
            <person name="Jolivet A."/>
            <person name="Jones S."/>
            <person name="Kagan R."/>
            <person name="King L.M."/>
            <person name="Leal B."/>
            <person name="Lebow H."/>
            <person name="Lee S."/>
            <person name="LeVan J.M."/>
            <person name="Lewis L.C."/>
            <person name="London P."/>
            <person name="Lorensuhewa L.M."/>
            <person name="Loulseged H."/>
            <person name="Lovett D.A."/>
            <person name="Lucier A."/>
            <person name="Lucier R.L."/>
            <person name="Ma J."/>
            <person name="Madu R.C."/>
            <person name="Mapua P."/>
            <person name="Martindale A.D."/>
            <person name="Martinez E."/>
            <person name="Massey E."/>
            <person name="Mawhiney S."/>
            <person name="Meador M.G."/>
            <person name="Mendez S."/>
            <person name="Mercado C."/>
            <person name="Mercado I.C."/>
            <person name="Merritt C.E."/>
            <person name="Miner Z.L."/>
            <person name="Minja E."/>
            <person name="Mitchell T."/>
            <person name="Mohabbat F."/>
            <person name="Mohabbat K."/>
            <person name="Montgomery B."/>
            <person name="Moore N."/>
            <person name="Morris S."/>
            <person name="Munidasa M."/>
            <person name="Ngo R.N."/>
            <person name="Nguyen N.B."/>
            <person name="Nickerson E."/>
            <person name="Nwaokelemeh O.O."/>
            <person name="Nwokenkwo S."/>
            <person name="Obregon M."/>
            <person name="Oguh M."/>
            <person name="Oragunye N."/>
            <person name="Oviedo R.J."/>
            <person name="Parish B.J."/>
            <person name="Parker D.N."/>
            <person name="Parrish J."/>
            <person name="Parks K.L."/>
            <person name="Paul H.A."/>
            <person name="Payton B.A."/>
            <person name="Perez A."/>
            <person name="Perrin W."/>
            <person name="Pickens A."/>
            <person name="Primus E.L."/>
            <person name="Pu L.-L."/>
            <person name="Puazo M."/>
            <person name="Quiles M.M."/>
            <person name="Quiroz J.B."/>
            <person name="Rabata D."/>
            <person name="Reeves K."/>
            <person name="Ruiz S.J."/>
            <person name="Shao H."/>
            <person name="Sisson I."/>
            <person name="Sonaike T."/>
            <person name="Sorelle R.P."/>
            <person name="Sutton A.E."/>
            <person name="Svatek A.F."/>
            <person name="Svetz L.A."/>
            <person name="Tamerisa K.S."/>
            <person name="Taylor T.R."/>
            <person name="Teague B."/>
            <person name="Thomas N."/>
            <person name="Thorn R.D."/>
            <person name="Trejos Z.Y."/>
            <person name="Trevino B.K."/>
            <person name="Ukegbu O.N."/>
            <person name="Urban J.B."/>
            <person name="Vasquez L.I."/>
            <person name="Vera V.A."/>
            <person name="Villasana D.M."/>
            <person name="Wang L."/>
            <person name="Ward-Moore S."/>
            <person name="Warren J.T."/>
            <person name="Wei X."/>
            <person name="White F."/>
            <person name="Williamson A.L."/>
            <person name="Wleczyk R."/>
            <person name="Wooden H.S."/>
            <person name="Wooden S.H."/>
            <person name="Yen J."/>
            <person name="Yoon L."/>
            <person name="Yoon V."/>
            <person name="Zorrilla S.E."/>
            <person name="Nelson D."/>
            <person name="Kucherlapati R."/>
            <person name="Weinstock G."/>
            <person name="Gibbs R.A."/>
        </authorList>
    </citation>
    <scope>NUCLEOTIDE SEQUENCE [LARGE SCALE GENOMIC DNA]</scope>
</reference>
<reference key="5">
    <citation type="journal article" date="2004" name="Genome Res.">
        <title>The status, quality, and expansion of the NIH full-length cDNA project: the Mammalian Gene Collection (MGC).</title>
        <authorList>
            <consortium name="The MGC Project Team"/>
        </authorList>
    </citation>
    <scope>NUCLEOTIDE SEQUENCE [LARGE SCALE MRNA] (ISOFORM 3)</scope>
    <source>
        <tissue>Brain</tissue>
    </source>
</reference>
<reference key="6">
    <citation type="journal article" date="1995" name="Arch. Biochem. Biophys.">
        <title>Analysis of melanoma cells stably transfected with beta 1,4GalNAc transferase (GM2/GD2 synthase) cDNA: relative glycosyltransferase levels play a dominant role in determining ganglioside expression.</title>
        <authorList>
            <person name="Ruan S."/>
            <person name="Raj B.K."/>
            <person name="Furukawa K."/>
            <person name="Lloyd K.O."/>
        </authorList>
    </citation>
    <scope>FUNCTION</scope>
    <scope>CATALYTIC ACTIVITY</scope>
</reference>
<reference key="7">
    <citation type="journal article" date="1995" name="J. Biol. Chem.">
        <title>Substrate specificity of beta 1,4-N-acetylgalactosaminyltransferase in vitro and in cDNA-transfected cells. GM2/GD2 synthase efficiently generates asialo-GM2 in certain cells.</title>
        <authorList>
            <person name="Yamashiro S."/>
            <person name="Haraguchi M."/>
            <person name="Furukawa K."/>
            <person name="Takamiya K."/>
            <person name="Yamamoto A."/>
            <person name="Nagata Y."/>
            <person name="Lloyd K.O."/>
            <person name="Shiku H."/>
            <person name="Furukawa K."/>
        </authorList>
    </citation>
    <scope>FUNCTION</scope>
    <scope>CATALYTIC ACTIVITY</scope>
    <scope>BIOPHYSICOCHEMICAL PROPERTIES</scope>
</reference>
<reference key="8">
    <citation type="journal article" date="2000" name="J. Biol. Chem.">
        <title>Disulfide bonds of GM2 synthase homodimers. Antiparallel orientation of the catalytic domains.</title>
        <authorList>
            <person name="Li J."/>
            <person name="Yen T.Y."/>
            <person name="Allende M.L."/>
            <person name="Joshi R.K."/>
            <person name="Cai J."/>
            <person name="Pierce W.M."/>
            <person name="Jaskiewicz E."/>
            <person name="Darling D.S."/>
            <person name="Macher B.A."/>
            <person name="Young W.W. Jr."/>
        </authorList>
    </citation>
    <scope>DISULFIDE BONDS</scope>
</reference>
<reference key="9">
    <citation type="journal article" date="2013" name="Am. J. Hum. Genet.">
        <title>Alteration of ganglioside biosynthesis responsible for complex hereditary spastic paraplegia.</title>
        <authorList>
            <person name="Boukhris A."/>
            <person name="Schule R."/>
            <person name="Loureiro J.L."/>
            <person name="Lourenco C.M."/>
            <person name="Mundwiller E."/>
            <person name="Gonzalez M.A."/>
            <person name="Charles P."/>
            <person name="Gauthier J."/>
            <person name="Rekik I."/>
            <person name="Acosta Lebrigio R.F."/>
            <person name="Gaussen M."/>
            <person name="Speziani F."/>
            <person name="Ferbert A."/>
            <person name="Feki I."/>
            <person name="Caballero-Oteyza A."/>
            <person name="Dionne-Laporte A."/>
            <person name="Amri M."/>
            <person name="Noreau A."/>
            <person name="Forlani S."/>
            <person name="Cruz V.T."/>
            <person name="Mochel F."/>
            <person name="Coutinho P."/>
            <person name="Dion P."/>
            <person name="Mhiri C."/>
            <person name="Schols L."/>
            <person name="Pouget J."/>
            <person name="Darios F."/>
            <person name="Rouleau G.A."/>
            <person name="Marques W. Jr."/>
            <person name="Brice A."/>
            <person name="Durr A."/>
            <person name="Zuchner S."/>
            <person name="Stevanin G."/>
        </authorList>
    </citation>
    <scope>VARIANTS SPG26 CYS-300 AND ALA-433</scope>
</reference>
<organism>
    <name type="scientific">Homo sapiens</name>
    <name type="common">Human</name>
    <dbReference type="NCBI Taxonomy" id="9606"/>
    <lineage>
        <taxon>Eukaryota</taxon>
        <taxon>Metazoa</taxon>
        <taxon>Chordata</taxon>
        <taxon>Craniata</taxon>
        <taxon>Vertebrata</taxon>
        <taxon>Euteleostomi</taxon>
        <taxon>Mammalia</taxon>
        <taxon>Eutheria</taxon>
        <taxon>Euarchontoglires</taxon>
        <taxon>Primates</taxon>
        <taxon>Haplorrhini</taxon>
        <taxon>Catarrhini</taxon>
        <taxon>Hominidae</taxon>
        <taxon>Homo</taxon>
    </lineage>
</organism>
<evidence type="ECO:0000250" key="1">
    <source>
        <dbReference type="UniProtKB" id="Q10468"/>
    </source>
</evidence>
<evidence type="ECO:0000255" key="2"/>
<evidence type="ECO:0000269" key="3">
    <source>
    </source>
</evidence>
<evidence type="ECO:0000269" key="4">
    <source>
    </source>
</evidence>
<evidence type="ECO:0000269" key="5">
    <source>
    </source>
</evidence>
<evidence type="ECO:0000269" key="6">
    <source>
    </source>
</evidence>
<evidence type="ECO:0000269" key="7">
    <source>
    </source>
</evidence>
<evidence type="ECO:0000303" key="8">
    <source>
    </source>
</evidence>
<evidence type="ECO:0000303" key="9">
    <source>
    </source>
</evidence>
<evidence type="ECO:0000305" key="10"/>
<evidence type="ECO:0000305" key="11">
    <source>
    </source>
</evidence>
<evidence type="ECO:0000312" key="12">
    <source>
        <dbReference type="HGNC" id="HGNC:4117"/>
    </source>
</evidence>
<feature type="chain" id="PRO_0000059100" description="Beta-1,4 N-acetylgalactosaminyltransferase 1">
    <location>
        <begin position="1"/>
        <end position="533"/>
    </location>
</feature>
<feature type="topological domain" description="Cytoplasmic" evidence="2">
    <location>
        <begin position="1"/>
        <end position="7"/>
    </location>
</feature>
<feature type="transmembrane region" description="Helical; Signal-anchor for type II membrane protein" evidence="2">
    <location>
        <begin position="8"/>
        <end position="25"/>
    </location>
</feature>
<feature type="topological domain" description="Lumenal" evidence="2">
    <location>
        <begin position="26"/>
        <end position="533"/>
    </location>
</feature>
<feature type="glycosylation site" description="N-linked (GlcNAc...) asparagine" evidence="2">
    <location>
        <position position="79"/>
    </location>
</feature>
<feature type="glycosylation site" description="N-linked (GlcNAc...) asparagine" evidence="2">
    <location>
        <position position="179"/>
    </location>
</feature>
<feature type="glycosylation site" description="N-linked (GlcNAc...) asparagine" evidence="2">
    <location>
        <position position="274"/>
    </location>
</feature>
<feature type="disulfide bond" description="Interchain (with C-412)" evidence="3">
    <location>
        <position position="80"/>
    </location>
</feature>
<feature type="disulfide bond" description="Interchain (with C-529)" evidence="3">
    <location>
        <position position="82"/>
    </location>
</feature>
<feature type="disulfide bond" description="Interchain (with C-80)" evidence="3">
    <location>
        <position position="412"/>
    </location>
</feature>
<feature type="disulfide bond" evidence="3">
    <location>
        <begin position="429"/>
        <end position="476"/>
    </location>
</feature>
<feature type="disulfide bond" description="Interchain (with C-82)" evidence="3">
    <location>
        <position position="529"/>
    </location>
</feature>
<feature type="splice variant" id="VSP_055039" description="In isoform 2." evidence="8">
    <location>
        <begin position="74"/>
        <end position="128"/>
    </location>
</feature>
<feature type="splice variant" id="VSP_055040" description="In isoform 3." evidence="9">
    <original>VRFSTEGHEAAFTIRIRHPPNPRLYPPGSLPQGAQYNISALVTIATKTFLRYDRLRALITSIRRFYPTVTVVIADDSDKPERVSGPYVEHY</original>
    <variation>GARPGWRDGQAGQTEKNQKGWSGQMAEGMGGIWAMARAVQPHNGCFNWTSRARGRKGAFVHLGLEQARGKPEPWVCLPFRPTVGGPRKRLV</variation>
    <location>
        <begin position="238"/>
        <end position="328"/>
    </location>
</feature>
<feature type="splice variant" id="VSP_055041" description="In isoform 3." evidence="9">
    <location>
        <begin position="329"/>
        <end position="533"/>
    </location>
</feature>
<feature type="sequence variant" id="VAR_012052" description="In dbSNP:rs774896.">
    <original>L</original>
    <variation>V</variation>
    <location>
        <position position="35"/>
    </location>
</feature>
<feature type="sequence variant" id="VAR_012053" description="In dbSNP:rs810205.">
    <original>G</original>
    <variation>R</variation>
    <location>
        <position position="172"/>
    </location>
</feature>
<feature type="sequence variant" id="VAR_070235" description="In SPG26; dbSNP:rs756710480." evidence="5">
    <original>R</original>
    <variation>C</variation>
    <location>
        <position position="300"/>
    </location>
</feature>
<feature type="sequence variant" id="VAR_070236" description="In SPG26; dbSNP:rs879255242." evidence="5">
    <original>D</original>
    <variation>A</variation>
    <location>
        <position position="433"/>
    </location>
</feature>
<feature type="sequence variant" id="VAR_049237" description="In dbSNP:rs17454674.">
    <original>A</original>
    <variation>V</variation>
    <location>
        <position position="516"/>
    </location>
</feature>
<comment type="function">
    <text evidence="4 6 7">Involved in the biosynthesis of gangliosides GM2, GD2, GT2 and GA2 from GM3, GD3, GT3 and GA3, respectively.</text>
</comment>
<comment type="catalytic activity">
    <reaction evidence="4 7">
        <text>a ganglioside GM3 (d18:1(4E)) + UDP-N-acetyl-alpha-D-galactosamine = a ganglioside GM2 (d18:1(4E)) + UDP + H(+)</text>
        <dbReference type="Rhea" id="RHEA:12588"/>
        <dbReference type="ChEBI" id="CHEBI:15378"/>
        <dbReference type="ChEBI" id="CHEBI:58223"/>
        <dbReference type="ChEBI" id="CHEBI:60065"/>
        <dbReference type="ChEBI" id="CHEBI:67138"/>
        <dbReference type="ChEBI" id="CHEBI:71502"/>
        <dbReference type="EC" id="2.4.1.92"/>
    </reaction>
    <physiologicalReaction direction="left-to-right" evidence="4 7">
        <dbReference type="Rhea" id="RHEA:12589"/>
    </physiologicalReaction>
</comment>
<comment type="catalytic activity">
    <reaction evidence="6 7">
        <text>a ganglioside GM3 + UDP-N-acetyl-alpha-D-galactosamine = a ganglioside GM2 + UDP + H(+)</text>
        <dbReference type="Rhea" id="RHEA:43268"/>
        <dbReference type="ChEBI" id="CHEBI:15378"/>
        <dbReference type="ChEBI" id="CHEBI:58223"/>
        <dbReference type="ChEBI" id="CHEBI:67138"/>
        <dbReference type="ChEBI" id="CHEBI:79210"/>
        <dbReference type="ChEBI" id="CHEBI:79218"/>
    </reaction>
    <physiologicalReaction direction="left-to-right" evidence="6 7">
        <dbReference type="Rhea" id="RHEA:43269"/>
    </physiologicalReaction>
</comment>
<comment type="catalytic activity">
    <reaction evidence="6 7">
        <text>a ganglioside GD3 + UDP-N-acetyl-alpha-D-galactosamine = a ganglioside GD2 + UDP + H(+)</text>
        <dbReference type="Rhea" id="RHEA:43272"/>
        <dbReference type="ChEBI" id="CHEBI:15378"/>
        <dbReference type="ChEBI" id="CHEBI:58223"/>
        <dbReference type="ChEBI" id="CHEBI:67138"/>
        <dbReference type="ChEBI" id="CHEBI:79214"/>
        <dbReference type="ChEBI" id="CHEBI:79220"/>
    </reaction>
    <physiologicalReaction direction="left-to-right" evidence="6 7">
        <dbReference type="Rhea" id="RHEA:43273"/>
    </physiologicalReaction>
</comment>
<comment type="catalytic activity">
    <reaction evidence="7">
        <text>a ganglioside GD3 (d18:1(4E)) + UDP-N-acetyl-alpha-D-galactosamine = a ganglioside GD2 (d18:1(4E)) + UDP + H(+)</text>
        <dbReference type="Rhea" id="RHEA:41816"/>
        <dbReference type="ChEBI" id="CHEBI:15378"/>
        <dbReference type="ChEBI" id="CHEBI:58223"/>
        <dbReference type="ChEBI" id="CHEBI:67138"/>
        <dbReference type="ChEBI" id="CHEBI:78436"/>
        <dbReference type="ChEBI" id="CHEBI:78542"/>
    </reaction>
    <physiologicalReaction direction="left-to-right" evidence="7">
        <dbReference type="Rhea" id="RHEA:41817"/>
    </physiologicalReaction>
</comment>
<comment type="catalytic activity">
    <reaction evidence="11">
        <text>a beta-D-Gal-(1-&gt;4)-beta-D-Glc-(1&lt;-&gt;1)-Cer(d18:1(4E)) + UDP-N-acetyl-alpha-D-galactosamine = a ganglioside GA2 (d18:1(4E)) + UDP + H(+)</text>
        <dbReference type="Rhea" id="RHEA:47564"/>
        <dbReference type="ChEBI" id="CHEBI:15378"/>
        <dbReference type="ChEBI" id="CHEBI:17950"/>
        <dbReference type="ChEBI" id="CHEBI:27731"/>
        <dbReference type="ChEBI" id="CHEBI:58223"/>
        <dbReference type="ChEBI" id="CHEBI:67138"/>
    </reaction>
    <physiologicalReaction direction="left-to-right" evidence="11">
        <dbReference type="Rhea" id="RHEA:47565"/>
    </physiologicalReaction>
</comment>
<comment type="catalytic activity">
    <reaction evidence="1">
        <text>a ganglioside GD1a + UDP-N-acetyl-alpha-D-galactosamine = a ganglioside GalNAc-GD1a + UDP + H(+)</text>
        <dbReference type="Rhea" id="RHEA:43276"/>
        <dbReference type="ChEBI" id="CHEBI:15378"/>
        <dbReference type="ChEBI" id="CHEBI:58223"/>
        <dbReference type="ChEBI" id="CHEBI:67138"/>
        <dbReference type="ChEBI" id="CHEBI:82637"/>
        <dbReference type="ChEBI" id="CHEBI:82945"/>
    </reaction>
    <physiologicalReaction direction="left-to-right" evidence="1">
        <dbReference type="Rhea" id="RHEA:43277"/>
    </physiologicalReaction>
</comment>
<comment type="catalytic activity">
    <reaction evidence="1">
        <text>a ganglioside GT3 (d18:1(4E)) + UDP-N-acetyl-alpha-D-galactosamine = a ganglioside GT2 (d18:1(4E)) + UDP + H(+)</text>
        <dbReference type="Rhea" id="RHEA:47580"/>
        <dbReference type="ChEBI" id="CHEBI:15378"/>
        <dbReference type="ChEBI" id="CHEBI:58223"/>
        <dbReference type="ChEBI" id="CHEBI:67138"/>
        <dbReference type="ChEBI" id="CHEBI:78438"/>
        <dbReference type="ChEBI" id="CHEBI:87788"/>
    </reaction>
    <physiologicalReaction direction="left-to-right" evidence="1">
        <dbReference type="Rhea" id="RHEA:47581"/>
    </physiologicalReaction>
</comment>
<comment type="catalytic activity">
    <reaction evidence="7">
        <text>a beta-D-galactosyl-(1-&gt;4)-beta-D-glucosyl-(1&lt;-&gt;1)-ceramide + UDP-N-acetyl-alpha-D-galactosamine = a ganglioside GA2 + UDP + H(+)</text>
        <dbReference type="Rhea" id="RHEA:62516"/>
        <dbReference type="ChEBI" id="CHEBI:15378"/>
        <dbReference type="ChEBI" id="CHEBI:58223"/>
        <dbReference type="ChEBI" id="CHEBI:67138"/>
        <dbReference type="ChEBI" id="CHEBI:79208"/>
        <dbReference type="ChEBI" id="CHEBI:90085"/>
    </reaction>
    <physiologicalReaction direction="left-to-right" evidence="7">
        <dbReference type="Rhea" id="RHEA:62517"/>
    </physiologicalReaction>
</comment>
<comment type="catalytic activity">
    <reaction evidence="1">
        <text>a neolactoside IV(3)-alpha-NeuGc-nLc4Cer + UDP-N-acetyl-alpha-D-galactosamine = a neolactoside IV(4)-beta-GalNAc-IV(3)-alpha-NeuGc-nLc4Cer + UDP + H(+)</text>
        <dbReference type="Rhea" id="RHEA:43300"/>
        <dbReference type="ChEBI" id="CHEBI:15378"/>
        <dbReference type="ChEBI" id="CHEBI:58223"/>
        <dbReference type="ChEBI" id="CHEBI:67138"/>
        <dbReference type="ChEBI" id="CHEBI:82950"/>
        <dbReference type="ChEBI" id="CHEBI:82951"/>
    </reaction>
    <physiologicalReaction direction="left-to-right" evidence="1">
        <dbReference type="Rhea" id="RHEA:43301"/>
    </physiologicalReaction>
</comment>
<comment type="biophysicochemical properties">
    <kinetics>
        <KM evidence="7">500 uM for GM3</KM>
        <KM evidence="7">40 uM for lactosylceramide</KM>
    </kinetics>
</comment>
<comment type="pathway">
    <text evidence="4 6 7">Sphingolipid metabolism.</text>
</comment>
<comment type="subunit">
    <text evidence="3">Homodimer; disulfide-linked.</text>
</comment>
<comment type="subcellular location">
    <subcellularLocation>
        <location evidence="1">Golgi apparatus membrane</location>
        <topology evidence="2">Single-pass type II membrane protein</topology>
    </subcellularLocation>
</comment>
<comment type="alternative products">
    <event type="alternative splicing"/>
    <isoform>
        <id>Q00973-1</id>
        <name>1</name>
        <sequence type="displayed"/>
    </isoform>
    <isoform>
        <id>Q00973-2</id>
        <name>2</name>
        <sequence type="described" ref="VSP_055039"/>
    </isoform>
    <isoform>
        <id>Q00973-3</id>
        <name>3</name>
        <sequence type="described" ref="VSP_055040 VSP_055041"/>
    </isoform>
</comment>
<comment type="disease" evidence="5">
    <disease id="DI-03866">
        <name>Spastic paraplegia 26, autosomal recessive</name>
        <acronym>SPG26</acronym>
        <description>A form of spastic paraplegia, a neurodegenerative disorder characterized by a slow, gradual, progressive weakness and spasticity of the lower limbs. Rate of progression and the severity of symptoms are quite variable. Initial symptoms may include difficulty with balance, weakness and stiffness in the legs, muscle spasms, and dragging the toes when walking. In some forms of the disorder, bladder symptoms (such as incontinence) may appear, or the weakness and stiffness may spread to other parts of the body. SPG26 is a complicated form characterized by onset in the first 2 decades of life of gait abnormalities due to lower limb spasticity and muscle weakness. Some patients have upper limb involvement. Additional features include intellectual disability, peripheral neuropathy, dysarthria, cerebellar signs, extrapyramidal signs, and cortical atrophy. The disorder is slowly progressive.</description>
        <dbReference type="MIM" id="609195"/>
    </disease>
    <text>The disease is caused by variants affecting the gene represented in this entry.</text>
</comment>
<comment type="similarity">
    <text evidence="10">Belongs to the glycosyltransferase 2 family.</text>
</comment>
<comment type="online information" name="Functional Glycomics Gateway - GTase">
    <link uri="http://www.functionalglycomics.org/glycomics/molecule/jsp/glycoEnzyme/viewGlycoEnzyme.jsp?gbpId=gt_hum_480"/>
    <text>Beta-1,4 N-acetylgalactosaminyltransferase 1</text>
</comment>
<name>B4GN1_HUMAN</name>
<proteinExistence type="evidence at protein level"/>